<dbReference type="EC" id="5.4.2.-" evidence="1"/>
<dbReference type="EMBL" id="FM200053">
    <property type="protein sequence ID" value="CAR62377.1"/>
    <property type="molecule type" value="Genomic_DNA"/>
</dbReference>
<dbReference type="RefSeq" id="WP_000942361.1">
    <property type="nucleotide sequence ID" value="NC_011147.1"/>
</dbReference>
<dbReference type="SMR" id="B5BAL1"/>
<dbReference type="KEGG" id="sek:SSPA4080"/>
<dbReference type="HOGENOM" id="CLU_033323_9_5_6"/>
<dbReference type="UniPathway" id="UPA00109">
    <property type="reaction ID" value="UER00186"/>
</dbReference>
<dbReference type="Proteomes" id="UP000001869">
    <property type="component" value="Chromosome"/>
</dbReference>
<dbReference type="GO" id="GO:0005737">
    <property type="term" value="C:cytoplasm"/>
    <property type="evidence" value="ECO:0007669"/>
    <property type="project" value="TreeGrafter"/>
</dbReference>
<dbReference type="GO" id="GO:0016791">
    <property type="term" value="F:phosphatase activity"/>
    <property type="evidence" value="ECO:0007669"/>
    <property type="project" value="TreeGrafter"/>
</dbReference>
<dbReference type="GO" id="GO:0004619">
    <property type="term" value="F:phosphoglycerate mutase activity"/>
    <property type="evidence" value="ECO:0007669"/>
    <property type="project" value="UniProtKB-UniRule"/>
</dbReference>
<dbReference type="GO" id="GO:0006096">
    <property type="term" value="P:glycolytic process"/>
    <property type="evidence" value="ECO:0007669"/>
    <property type="project" value="UniProtKB-UniRule"/>
</dbReference>
<dbReference type="CDD" id="cd07067">
    <property type="entry name" value="HP_PGM_like"/>
    <property type="match status" value="1"/>
</dbReference>
<dbReference type="Gene3D" id="3.40.50.1240">
    <property type="entry name" value="Phosphoglycerate mutase-like"/>
    <property type="match status" value="1"/>
</dbReference>
<dbReference type="HAMAP" id="MF_01040">
    <property type="entry name" value="PGAM_GpmB"/>
    <property type="match status" value="1"/>
</dbReference>
<dbReference type="InterPro" id="IPR013078">
    <property type="entry name" value="His_Pase_superF_clade-1"/>
</dbReference>
<dbReference type="InterPro" id="IPR029033">
    <property type="entry name" value="His_PPase_superfam"/>
</dbReference>
<dbReference type="InterPro" id="IPR001345">
    <property type="entry name" value="PG/BPGM_mutase_AS"/>
</dbReference>
<dbReference type="InterPro" id="IPR050275">
    <property type="entry name" value="PGM_Phosphatase"/>
</dbReference>
<dbReference type="InterPro" id="IPR023086">
    <property type="entry name" value="Phosphoglycerate_mutase_GpmB"/>
</dbReference>
<dbReference type="NCBIfam" id="NF002901">
    <property type="entry name" value="PRK03482.1"/>
    <property type="match status" value="1"/>
</dbReference>
<dbReference type="PANTHER" id="PTHR48100">
    <property type="entry name" value="BROAD-SPECIFICITY PHOSPHATASE YOR283W-RELATED"/>
    <property type="match status" value="1"/>
</dbReference>
<dbReference type="PANTHER" id="PTHR48100:SF1">
    <property type="entry name" value="HISTIDINE PHOSPHATASE FAMILY PROTEIN-RELATED"/>
    <property type="match status" value="1"/>
</dbReference>
<dbReference type="Pfam" id="PF00300">
    <property type="entry name" value="His_Phos_1"/>
    <property type="match status" value="1"/>
</dbReference>
<dbReference type="SMART" id="SM00855">
    <property type="entry name" value="PGAM"/>
    <property type="match status" value="1"/>
</dbReference>
<dbReference type="SUPFAM" id="SSF53254">
    <property type="entry name" value="Phosphoglycerate mutase-like"/>
    <property type="match status" value="1"/>
</dbReference>
<dbReference type="PROSITE" id="PS00175">
    <property type="entry name" value="PG_MUTASE"/>
    <property type="match status" value="1"/>
</dbReference>
<name>GPMB_SALPK</name>
<comment type="catalytic activity">
    <reaction evidence="1">
        <text>(2R)-2-phosphoglycerate = (2R)-3-phosphoglycerate</text>
        <dbReference type="Rhea" id="RHEA:15901"/>
        <dbReference type="ChEBI" id="CHEBI:58272"/>
        <dbReference type="ChEBI" id="CHEBI:58289"/>
    </reaction>
</comment>
<comment type="pathway">
    <text evidence="1">Carbohydrate degradation; glycolysis; pyruvate from D-glyceraldehyde 3-phosphate: step 3/5.</text>
</comment>
<comment type="similarity">
    <text evidence="1">Belongs to the phosphoglycerate mutase family. GpmB subfamily.</text>
</comment>
<feature type="chain" id="PRO_1000136017" description="Probable phosphoglycerate mutase GpmB">
    <location>
        <begin position="1"/>
        <end position="215"/>
    </location>
</feature>
<feature type="active site" description="Tele-phosphohistidine intermediate" evidence="1">
    <location>
        <position position="9"/>
    </location>
</feature>
<feature type="active site" description="Proton donor/acceptor" evidence="1">
    <location>
        <position position="82"/>
    </location>
</feature>
<feature type="binding site" evidence="1">
    <location>
        <begin position="8"/>
        <end position="15"/>
    </location>
    <ligand>
        <name>substrate</name>
    </ligand>
</feature>
<feature type="binding site" evidence="1">
    <location>
        <begin position="21"/>
        <end position="22"/>
    </location>
    <ligand>
        <name>substrate</name>
    </ligand>
</feature>
<feature type="binding site" evidence="1">
    <location>
        <position position="58"/>
    </location>
    <ligand>
        <name>substrate</name>
    </ligand>
</feature>
<feature type="binding site" evidence="1">
    <location>
        <position position="60"/>
    </location>
    <ligand>
        <name>substrate</name>
    </ligand>
</feature>
<feature type="binding site" evidence="1">
    <location>
        <begin position="82"/>
        <end position="85"/>
    </location>
    <ligand>
        <name>substrate</name>
    </ligand>
</feature>
<feature type="binding site" evidence="1">
    <location>
        <begin position="104"/>
        <end position="105"/>
    </location>
    <ligand>
        <name>substrate</name>
    </ligand>
</feature>
<feature type="binding site" evidence="1">
    <location>
        <begin position="151"/>
        <end position="152"/>
    </location>
    <ligand>
        <name>substrate</name>
    </ligand>
</feature>
<feature type="site" description="Transition state stabilizer" evidence="1">
    <location>
        <position position="150"/>
    </location>
</feature>
<sequence length="215" mass="23884">MLQVYLVRHGETQWNAERRIQGQSDSPLTAKGEQQAMQVGERARSLGITHIISSDLGRTKRTAEIIAQACGCDITFDSRLRELDMGVLEKRQIDSLTEEEEGWRRQLVNGTQDGRILGGESMQELSDRVHAALASCLELPQGSRPLLVSHGIALGCLVSTILGLPAWAERRLRLRNCSISRIDYQESQWLASGWVVETAGDVSHLDAPALDELQR</sequence>
<evidence type="ECO:0000255" key="1">
    <source>
        <dbReference type="HAMAP-Rule" id="MF_01040"/>
    </source>
</evidence>
<organism>
    <name type="scientific">Salmonella paratyphi A (strain AKU_12601)</name>
    <dbReference type="NCBI Taxonomy" id="554290"/>
    <lineage>
        <taxon>Bacteria</taxon>
        <taxon>Pseudomonadati</taxon>
        <taxon>Pseudomonadota</taxon>
        <taxon>Gammaproteobacteria</taxon>
        <taxon>Enterobacterales</taxon>
        <taxon>Enterobacteriaceae</taxon>
        <taxon>Salmonella</taxon>
    </lineage>
</organism>
<accession>B5BAL1</accession>
<gene>
    <name evidence="1" type="primary">gpmB</name>
    <name type="ordered locus">SSPA4080</name>
</gene>
<reference key="1">
    <citation type="journal article" date="2009" name="BMC Genomics">
        <title>Pseudogene accumulation in the evolutionary histories of Salmonella enterica serovars Paratyphi A and Typhi.</title>
        <authorList>
            <person name="Holt K.E."/>
            <person name="Thomson N.R."/>
            <person name="Wain J."/>
            <person name="Langridge G.C."/>
            <person name="Hasan R."/>
            <person name="Bhutta Z.A."/>
            <person name="Quail M.A."/>
            <person name="Norbertczak H."/>
            <person name="Walker D."/>
            <person name="Simmonds M."/>
            <person name="White B."/>
            <person name="Bason N."/>
            <person name="Mungall K."/>
            <person name="Dougan G."/>
            <person name="Parkhill J."/>
        </authorList>
    </citation>
    <scope>NUCLEOTIDE SEQUENCE [LARGE SCALE GENOMIC DNA]</scope>
    <source>
        <strain>AKU_12601</strain>
    </source>
</reference>
<keyword id="KW-0324">Glycolysis</keyword>
<keyword id="KW-0413">Isomerase</keyword>
<protein>
    <recommendedName>
        <fullName evidence="1">Probable phosphoglycerate mutase GpmB</fullName>
        <ecNumber evidence="1">5.4.2.-</ecNumber>
    </recommendedName>
    <alternativeName>
        <fullName evidence="1">PGAM</fullName>
    </alternativeName>
    <alternativeName>
        <fullName evidence="1">Phosphoglyceromutase</fullName>
    </alternativeName>
</protein>
<proteinExistence type="inferred from homology"/>